<reference key="1">
    <citation type="submission" date="2007-04" db="EMBL/GenBank/DDBJ databases">
        <title>Complete sequence of Pseudomonas mendocina ymp.</title>
        <authorList>
            <consortium name="US DOE Joint Genome Institute"/>
            <person name="Copeland A."/>
            <person name="Lucas S."/>
            <person name="Lapidus A."/>
            <person name="Barry K."/>
            <person name="Glavina del Rio T."/>
            <person name="Dalin E."/>
            <person name="Tice H."/>
            <person name="Pitluck S."/>
            <person name="Kiss H."/>
            <person name="Brettin T."/>
            <person name="Detter J.C."/>
            <person name="Bruce D."/>
            <person name="Han C."/>
            <person name="Schmutz J."/>
            <person name="Larimer F."/>
            <person name="Land M."/>
            <person name="Hauser L."/>
            <person name="Kyrpides N."/>
            <person name="Mikhailova N."/>
            <person name="Hersman L."/>
            <person name="Dubois J."/>
            <person name="Maurice P."/>
            <person name="Richardson P."/>
        </authorList>
    </citation>
    <scope>NUCLEOTIDE SEQUENCE [LARGE SCALE GENOMIC DNA]</scope>
    <source>
        <strain>ymp</strain>
    </source>
</reference>
<name>GUAA_ECTM1</name>
<comment type="function">
    <text evidence="1">Catalyzes the synthesis of GMP from XMP.</text>
</comment>
<comment type="catalytic activity">
    <reaction evidence="1">
        <text>XMP + L-glutamine + ATP + H2O = GMP + L-glutamate + AMP + diphosphate + 2 H(+)</text>
        <dbReference type="Rhea" id="RHEA:11680"/>
        <dbReference type="ChEBI" id="CHEBI:15377"/>
        <dbReference type="ChEBI" id="CHEBI:15378"/>
        <dbReference type="ChEBI" id="CHEBI:29985"/>
        <dbReference type="ChEBI" id="CHEBI:30616"/>
        <dbReference type="ChEBI" id="CHEBI:33019"/>
        <dbReference type="ChEBI" id="CHEBI:57464"/>
        <dbReference type="ChEBI" id="CHEBI:58115"/>
        <dbReference type="ChEBI" id="CHEBI:58359"/>
        <dbReference type="ChEBI" id="CHEBI:456215"/>
        <dbReference type="EC" id="6.3.5.2"/>
    </reaction>
</comment>
<comment type="pathway">
    <text evidence="1">Purine metabolism; GMP biosynthesis; GMP from XMP (L-Gln route): step 1/1.</text>
</comment>
<comment type="subunit">
    <text evidence="1">Homodimer.</text>
</comment>
<keyword id="KW-0067">ATP-binding</keyword>
<keyword id="KW-0315">Glutamine amidotransferase</keyword>
<keyword id="KW-0332">GMP biosynthesis</keyword>
<keyword id="KW-0436">Ligase</keyword>
<keyword id="KW-0547">Nucleotide-binding</keyword>
<keyword id="KW-0658">Purine biosynthesis</keyword>
<sequence>MAHDIHAHRILILDFGSQYTQLIARRVREIGVYCELHPWDMSDEDIRAFAPRGIILAGGPESVHEANSPRAPQAVFDLNVPVLGICYGMQTMAEQLGGKVEGSDLREFGYARVDVVGKSQLLAGIEDHVDADGVFGLDVWMSHGDKVTRLPEGFHILASTPSCPIAAMSDDTRHYYGVQFHPEVTHTKQGGRILSRFVLEISGCEALWTPANIVEDAVAAVRAQVGDANVLLGLSGGVDSSVVAALLHKAIGDQLTCVFVDNGLLRLHEGDQVMAMFAENMGVKVIRANAEEQFLSNLAGESDPEKKRKIIGRTFIDVFDAEASKLDNIQFLAQGTIYPDVIESAGAKSGKAHVIKSHHNVGGLPEEMNLKLVEPLRELFKDEVRKIGLELGLPYDMVYRHPFPGPGLGVRILGEVKKEYADLLRRADHIFIEELRKADWYHKTSQAFVVFQPVKSVGVVGDGRRYAWVVALRAVETVDFMTARWAHLPYELLETVSGRIINEIEGISRVTYDVSSKPPATIEWE</sequence>
<dbReference type="EC" id="6.3.5.2" evidence="1"/>
<dbReference type="EMBL" id="CP000680">
    <property type="protein sequence ID" value="ABP86233.1"/>
    <property type="molecule type" value="Genomic_DNA"/>
</dbReference>
<dbReference type="SMR" id="A4XY17"/>
<dbReference type="STRING" id="399739.Pmen_3485"/>
<dbReference type="MEROPS" id="C26.957"/>
<dbReference type="KEGG" id="pmy:Pmen_3485"/>
<dbReference type="PATRIC" id="fig|399739.8.peg.3531"/>
<dbReference type="eggNOG" id="COG0518">
    <property type="taxonomic scope" value="Bacteria"/>
</dbReference>
<dbReference type="eggNOG" id="COG0519">
    <property type="taxonomic scope" value="Bacteria"/>
</dbReference>
<dbReference type="HOGENOM" id="CLU_014340_0_5_6"/>
<dbReference type="OrthoDB" id="9802219at2"/>
<dbReference type="UniPathway" id="UPA00189">
    <property type="reaction ID" value="UER00296"/>
</dbReference>
<dbReference type="GO" id="GO:0005829">
    <property type="term" value="C:cytosol"/>
    <property type="evidence" value="ECO:0007669"/>
    <property type="project" value="TreeGrafter"/>
</dbReference>
<dbReference type="GO" id="GO:0005524">
    <property type="term" value="F:ATP binding"/>
    <property type="evidence" value="ECO:0007669"/>
    <property type="project" value="UniProtKB-UniRule"/>
</dbReference>
<dbReference type="GO" id="GO:0003921">
    <property type="term" value="F:GMP synthase activity"/>
    <property type="evidence" value="ECO:0007669"/>
    <property type="project" value="InterPro"/>
</dbReference>
<dbReference type="CDD" id="cd01742">
    <property type="entry name" value="GATase1_GMP_Synthase"/>
    <property type="match status" value="1"/>
</dbReference>
<dbReference type="CDD" id="cd01997">
    <property type="entry name" value="GMP_synthase_C"/>
    <property type="match status" value="1"/>
</dbReference>
<dbReference type="FunFam" id="3.30.300.10:FF:000002">
    <property type="entry name" value="GMP synthase [glutamine-hydrolyzing]"/>
    <property type="match status" value="1"/>
</dbReference>
<dbReference type="FunFam" id="3.40.50.620:FF:000001">
    <property type="entry name" value="GMP synthase [glutamine-hydrolyzing]"/>
    <property type="match status" value="1"/>
</dbReference>
<dbReference type="FunFam" id="3.40.50.880:FF:000001">
    <property type="entry name" value="GMP synthase [glutamine-hydrolyzing]"/>
    <property type="match status" value="1"/>
</dbReference>
<dbReference type="Gene3D" id="3.30.300.10">
    <property type="match status" value="1"/>
</dbReference>
<dbReference type="Gene3D" id="3.40.50.880">
    <property type="match status" value="1"/>
</dbReference>
<dbReference type="Gene3D" id="3.40.50.620">
    <property type="entry name" value="HUPs"/>
    <property type="match status" value="1"/>
</dbReference>
<dbReference type="HAMAP" id="MF_00344">
    <property type="entry name" value="GMP_synthase"/>
    <property type="match status" value="1"/>
</dbReference>
<dbReference type="InterPro" id="IPR029062">
    <property type="entry name" value="Class_I_gatase-like"/>
</dbReference>
<dbReference type="InterPro" id="IPR017926">
    <property type="entry name" value="GATASE"/>
</dbReference>
<dbReference type="InterPro" id="IPR001674">
    <property type="entry name" value="GMP_synth_C"/>
</dbReference>
<dbReference type="InterPro" id="IPR004739">
    <property type="entry name" value="GMP_synth_GATase"/>
</dbReference>
<dbReference type="InterPro" id="IPR022955">
    <property type="entry name" value="GMP_synthase"/>
</dbReference>
<dbReference type="InterPro" id="IPR025777">
    <property type="entry name" value="GMPS_ATP_PPase_dom"/>
</dbReference>
<dbReference type="InterPro" id="IPR022310">
    <property type="entry name" value="NAD/GMP_synthase"/>
</dbReference>
<dbReference type="InterPro" id="IPR014729">
    <property type="entry name" value="Rossmann-like_a/b/a_fold"/>
</dbReference>
<dbReference type="NCBIfam" id="TIGR00884">
    <property type="entry name" value="guaA_Cterm"/>
    <property type="match status" value="1"/>
</dbReference>
<dbReference type="NCBIfam" id="TIGR00888">
    <property type="entry name" value="guaA_Nterm"/>
    <property type="match status" value="1"/>
</dbReference>
<dbReference type="NCBIfam" id="NF000848">
    <property type="entry name" value="PRK00074.1"/>
    <property type="match status" value="1"/>
</dbReference>
<dbReference type="PANTHER" id="PTHR11922:SF2">
    <property type="entry name" value="GMP SYNTHASE [GLUTAMINE-HYDROLYZING]"/>
    <property type="match status" value="1"/>
</dbReference>
<dbReference type="PANTHER" id="PTHR11922">
    <property type="entry name" value="GMP SYNTHASE-RELATED"/>
    <property type="match status" value="1"/>
</dbReference>
<dbReference type="Pfam" id="PF00117">
    <property type="entry name" value="GATase"/>
    <property type="match status" value="1"/>
</dbReference>
<dbReference type="Pfam" id="PF00958">
    <property type="entry name" value="GMP_synt_C"/>
    <property type="match status" value="1"/>
</dbReference>
<dbReference type="Pfam" id="PF02540">
    <property type="entry name" value="NAD_synthase"/>
    <property type="match status" value="1"/>
</dbReference>
<dbReference type="PRINTS" id="PR00097">
    <property type="entry name" value="ANTSNTHASEII"/>
</dbReference>
<dbReference type="PRINTS" id="PR00096">
    <property type="entry name" value="GATASE"/>
</dbReference>
<dbReference type="SUPFAM" id="SSF52402">
    <property type="entry name" value="Adenine nucleotide alpha hydrolases-like"/>
    <property type="match status" value="1"/>
</dbReference>
<dbReference type="SUPFAM" id="SSF52317">
    <property type="entry name" value="Class I glutamine amidotransferase-like"/>
    <property type="match status" value="1"/>
</dbReference>
<dbReference type="SUPFAM" id="SSF54810">
    <property type="entry name" value="GMP synthetase C-terminal dimerisation domain"/>
    <property type="match status" value="1"/>
</dbReference>
<dbReference type="PROSITE" id="PS51273">
    <property type="entry name" value="GATASE_TYPE_1"/>
    <property type="match status" value="1"/>
</dbReference>
<dbReference type="PROSITE" id="PS51553">
    <property type="entry name" value="GMPS_ATP_PPASE"/>
    <property type="match status" value="1"/>
</dbReference>
<protein>
    <recommendedName>
        <fullName evidence="1">GMP synthase [glutamine-hydrolyzing]</fullName>
        <ecNumber evidence="1">6.3.5.2</ecNumber>
    </recommendedName>
    <alternativeName>
        <fullName evidence="1">GMP synthetase</fullName>
    </alternativeName>
    <alternativeName>
        <fullName evidence="1">Glutamine amidotransferase</fullName>
    </alternativeName>
</protein>
<organism>
    <name type="scientific">Ectopseudomonas mendocina (strain ymp)</name>
    <name type="common">Pseudomonas mendocina</name>
    <dbReference type="NCBI Taxonomy" id="399739"/>
    <lineage>
        <taxon>Bacteria</taxon>
        <taxon>Pseudomonadati</taxon>
        <taxon>Pseudomonadota</taxon>
        <taxon>Gammaproteobacteria</taxon>
        <taxon>Pseudomonadales</taxon>
        <taxon>Pseudomonadaceae</taxon>
        <taxon>Ectopseudomonas</taxon>
    </lineage>
</organism>
<accession>A4XY17</accession>
<evidence type="ECO:0000255" key="1">
    <source>
        <dbReference type="HAMAP-Rule" id="MF_00344"/>
    </source>
</evidence>
<feature type="chain" id="PRO_1000120369" description="GMP synthase [glutamine-hydrolyzing]">
    <location>
        <begin position="1"/>
        <end position="525"/>
    </location>
</feature>
<feature type="domain" description="Glutamine amidotransferase type-1" evidence="1">
    <location>
        <begin position="9"/>
        <end position="207"/>
    </location>
</feature>
<feature type="domain" description="GMPS ATP-PPase" evidence="1">
    <location>
        <begin position="208"/>
        <end position="400"/>
    </location>
</feature>
<feature type="active site" description="Nucleophile" evidence="1">
    <location>
        <position position="86"/>
    </location>
</feature>
<feature type="active site" evidence="1">
    <location>
        <position position="181"/>
    </location>
</feature>
<feature type="active site" evidence="1">
    <location>
        <position position="183"/>
    </location>
</feature>
<feature type="binding site" evidence="1">
    <location>
        <begin position="235"/>
        <end position="241"/>
    </location>
    <ligand>
        <name>ATP</name>
        <dbReference type="ChEBI" id="CHEBI:30616"/>
    </ligand>
</feature>
<proteinExistence type="inferred from homology"/>
<gene>
    <name evidence="1" type="primary">guaA</name>
    <name type="ordered locus">Pmen_3485</name>
</gene>